<name>DUS3_BOTFB</name>
<gene>
    <name type="primary">dus3</name>
    <name type="ORF">BC1G_01653</name>
    <name type="ORF">BCIN_05g02250</name>
</gene>
<proteinExistence type="inferred from homology"/>
<comment type="function">
    <text evidence="1 3">Catalyzes the synthesis of dihydrouridine, a modified base found in the D-loop of most tRNAs. Specifically modifies U47 in cytoplasmic tRNAs (By similarity). Catalyzes the synthesis of dihydrouridine in some mRNAs, thereby affecting their translation (By similarity).</text>
</comment>
<comment type="catalytic activity">
    <reaction evidence="1">
        <text>5,6-dihydrouridine(47) in tRNA + NAD(+) = uridine(47) in tRNA + NADH + H(+)</text>
        <dbReference type="Rhea" id="RHEA:53364"/>
        <dbReference type="Rhea" id="RHEA-COMP:13539"/>
        <dbReference type="Rhea" id="RHEA-COMP:13540"/>
        <dbReference type="ChEBI" id="CHEBI:15378"/>
        <dbReference type="ChEBI" id="CHEBI:57540"/>
        <dbReference type="ChEBI" id="CHEBI:57945"/>
        <dbReference type="ChEBI" id="CHEBI:65315"/>
        <dbReference type="ChEBI" id="CHEBI:74443"/>
        <dbReference type="EC" id="1.3.1.89"/>
    </reaction>
    <physiologicalReaction direction="right-to-left" evidence="1">
        <dbReference type="Rhea" id="RHEA:53366"/>
    </physiologicalReaction>
</comment>
<comment type="catalytic activity">
    <reaction evidence="1">
        <text>5,6-dihydrouridine(47) in tRNA + NADP(+) = uridine(47) in tRNA + NADPH + H(+)</text>
        <dbReference type="Rhea" id="RHEA:53360"/>
        <dbReference type="Rhea" id="RHEA-COMP:13539"/>
        <dbReference type="Rhea" id="RHEA-COMP:13540"/>
        <dbReference type="ChEBI" id="CHEBI:15378"/>
        <dbReference type="ChEBI" id="CHEBI:57783"/>
        <dbReference type="ChEBI" id="CHEBI:58349"/>
        <dbReference type="ChEBI" id="CHEBI:65315"/>
        <dbReference type="ChEBI" id="CHEBI:74443"/>
        <dbReference type="EC" id="1.3.1.89"/>
    </reaction>
    <physiologicalReaction direction="right-to-left" evidence="1">
        <dbReference type="Rhea" id="RHEA:53362"/>
    </physiologicalReaction>
</comment>
<comment type="catalytic activity">
    <reaction evidence="3">
        <text>a 5,6-dihydrouridine in mRNA + NAD(+) = a uridine in mRNA + NADH + H(+)</text>
        <dbReference type="Rhea" id="RHEA:69851"/>
        <dbReference type="Rhea" id="RHEA-COMP:14658"/>
        <dbReference type="Rhea" id="RHEA-COMP:17789"/>
        <dbReference type="ChEBI" id="CHEBI:15378"/>
        <dbReference type="ChEBI" id="CHEBI:57540"/>
        <dbReference type="ChEBI" id="CHEBI:57945"/>
        <dbReference type="ChEBI" id="CHEBI:65315"/>
        <dbReference type="ChEBI" id="CHEBI:74443"/>
    </reaction>
    <physiologicalReaction direction="right-to-left" evidence="3">
        <dbReference type="Rhea" id="RHEA:69853"/>
    </physiologicalReaction>
</comment>
<comment type="catalytic activity">
    <reaction evidence="3">
        <text>a 5,6-dihydrouridine in mRNA + NADP(+) = a uridine in mRNA + NADPH + H(+)</text>
        <dbReference type="Rhea" id="RHEA:69855"/>
        <dbReference type="Rhea" id="RHEA-COMP:14658"/>
        <dbReference type="Rhea" id="RHEA-COMP:17789"/>
        <dbReference type="ChEBI" id="CHEBI:15378"/>
        <dbReference type="ChEBI" id="CHEBI:57783"/>
        <dbReference type="ChEBI" id="CHEBI:58349"/>
        <dbReference type="ChEBI" id="CHEBI:65315"/>
        <dbReference type="ChEBI" id="CHEBI:74443"/>
    </reaction>
    <physiologicalReaction direction="right-to-left" evidence="3">
        <dbReference type="Rhea" id="RHEA:69857"/>
    </physiologicalReaction>
</comment>
<comment type="cofactor">
    <cofactor evidence="2">
        <name>FMN</name>
        <dbReference type="ChEBI" id="CHEBI:58210"/>
    </cofactor>
</comment>
<comment type="subcellular location">
    <subcellularLocation>
        <location evidence="1">Cytoplasm</location>
    </subcellularLocation>
    <subcellularLocation>
        <location evidence="1">Nucleus</location>
    </subcellularLocation>
</comment>
<comment type="similarity">
    <text evidence="5">Belongs to the Dus family. Dus3 subfamily.</text>
</comment>
<protein>
    <recommendedName>
        <fullName>tRNA-dihydrouridine(47) synthase [NAD(P)(+)]</fullName>
        <ecNumber evidence="1">1.3.1.89</ecNumber>
    </recommendedName>
    <alternativeName>
        <fullName>mRNA-dihydrouridine synthase dus3</fullName>
        <ecNumber evidence="3">1.3.1.-</ecNumber>
    </alternativeName>
    <alternativeName>
        <fullName>tRNA-dihydrouridine synthase 3</fullName>
    </alternativeName>
</protein>
<sequence length="750" mass="83981">MADEISNPVDPSQSLKRPLEGEQLEEAHPPQPILPEDSAVTKAEKVERNGTNGDSVDNGEPSAKRVRIEEKNHKPTAADSRDRIRGIAPVKAEYLIQPAGSRSATDDRNPAENDDDAEGKPRGDERDNGGKKKKKAKGQNKDRQFGSWGDKIKLCNSISNSSEFSPKECSFGDSCKCEHNLRKYLAEGRRADLTTFNSKCPVWEDNGTCLAGWKCRFVGSHSKEIQREDGRMELVLIDDSDRMGDTALGYEEALGSVVNVISTKDKIDLAKKKTPMEKSDLYTTWLDQNSEEVNRQSNLRKDQKNDQTEEEKQENRARYVEPPFLPSEKRRIYFGPETPVLAPLTTQGNLPFRRLCVELGAQLTYSEMAMSIPLLQGQKSEWALMKAHKSEVTPPRVNSDRTSIVRKYDNSKDLKFGTQISASKPFMAIKAAEVLSRFVPHLRVIDLNCGCPIELVYRQGAGSALLDAPSKLEKMIRGMNAVSGEVPITAKIRMGTMTGKPTAFKTIERLAFGGVESRERLGAPGCAAITLHGRSRQQRYTKSADWSYIAECAALVKSYNQKKDDLTDTVMEPDARTLPNAPDGKIHFIGNGDCYSHIDYLDHIQNAGVDSVMVARGALIKPWLFEEIEKGQVLDKSASERLEYVEKFTRYGLEAWGSDEIGVGQTRRFLLEWLSFAHRYVPAGILEHLPPSLQDRPPAYRGRNDLETLLASDNYMDWMKISEMFLGPAHEGFKFQPKHKSNSYEIEAEG</sequence>
<feature type="chain" id="PRO_0000330231" description="tRNA-dihydrouridine(47) synthase [NAD(P)(+)]">
    <location>
        <begin position="1"/>
        <end position="750"/>
    </location>
</feature>
<feature type="zinc finger region" description="C3H1-type 1">
    <location>
        <begin position="155"/>
        <end position="179"/>
    </location>
</feature>
<feature type="zinc finger region" description="C3H1-type 2">
    <location>
        <begin position="200"/>
        <end position="221"/>
    </location>
</feature>
<feature type="region of interest" description="Disordered" evidence="4">
    <location>
        <begin position="1"/>
        <end position="145"/>
    </location>
</feature>
<feature type="region of interest" description="Disordered" evidence="4">
    <location>
        <begin position="292"/>
        <end position="319"/>
    </location>
</feature>
<feature type="compositionally biased region" description="Basic and acidic residues" evidence="4">
    <location>
        <begin position="17"/>
        <end position="28"/>
    </location>
</feature>
<feature type="compositionally biased region" description="Basic and acidic residues" evidence="4">
    <location>
        <begin position="62"/>
        <end position="73"/>
    </location>
</feature>
<feature type="compositionally biased region" description="Basic and acidic residues" evidence="4">
    <location>
        <begin position="118"/>
        <end position="130"/>
    </location>
</feature>
<feature type="active site" description="Proton donor" evidence="2">
    <location>
        <position position="451"/>
    </location>
</feature>
<feature type="binding site" evidence="2">
    <location>
        <begin position="343"/>
        <end position="345"/>
    </location>
    <ligand>
        <name>FMN</name>
        <dbReference type="ChEBI" id="CHEBI:58210"/>
    </ligand>
</feature>
<feature type="binding site" evidence="2">
    <location>
        <position position="419"/>
    </location>
    <ligand>
        <name>FMN</name>
        <dbReference type="ChEBI" id="CHEBI:58210"/>
    </ligand>
</feature>
<feature type="binding site" evidence="2">
    <location>
        <position position="491"/>
    </location>
    <ligand>
        <name>FMN</name>
        <dbReference type="ChEBI" id="CHEBI:58210"/>
    </ligand>
</feature>
<feature type="binding site" evidence="2">
    <location>
        <position position="532"/>
    </location>
    <ligand>
        <name>FMN</name>
        <dbReference type="ChEBI" id="CHEBI:58210"/>
    </ligand>
</feature>
<feature type="binding site" evidence="2">
    <location>
        <begin position="591"/>
        <end position="593"/>
    </location>
    <ligand>
        <name>FMN</name>
        <dbReference type="ChEBI" id="CHEBI:58210"/>
    </ligand>
</feature>
<feature type="binding site" evidence="2">
    <location>
        <begin position="615"/>
        <end position="616"/>
    </location>
    <ligand>
        <name>FMN</name>
        <dbReference type="ChEBI" id="CHEBI:58210"/>
    </ligand>
</feature>
<evidence type="ECO:0000250" key="1">
    <source>
        <dbReference type="UniProtKB" id="Q06053"/>
    </source>
</evidence>
<evidence type="ECO:0000250" key="2">
    <source>
        <dbReference type="UniProtKB" id="Q5SMC7"/>
    </source>
</evidence>
<evidence type="ECO:0000250" key="3">
    <source>
        <dbReference type="UniProtKB" id="Q9UTH9"/>
    </source>
</evidence>
<evidence type="ECO:0000256" key="4">
    <source>
        <dbReference type="SAM" id="MobiDB-lite"/>
    </source>
</evidence>
<evidence type="ECO:0000305" key="5"/>
<keyword id="KW-0963">Cytoplasm</keyword>
<keyword id="KW-0285">Flavoprotein</keyword>
<keyword id="KW-0288">FMN</keyword>
<keyword id="KW-0479">Metal-binding</keyword>
<keyword id="KW-0507">mRNA processing</keyword>
<keyword id="KW-0520">NAD</keyword>
<keyword id="KW-0521">NADP</keyword>
<keyword id="KW-0539">Nucleus</keyword>
<keyword id="KW-0560">Oxidoreductase</keyword>
<keyword id="KW-1185">Reference proteome</keyword>
<keyword id="KW-0677">Repeat</keyword>
<keyword id="KW-0819">tRNA processing</keyword>
<keyword id="KW-0862">Zinc</keyword>
<keyword id="KW-0863">Zinc-finger</keyword>
<dbReference type="EC" id="1.3.1.89" evidence="1"/>
<dbReference type="EC" id="1.3.1.-" evidence="3"/>
<dbReference type="EMBL" id="CP009809">
    <property type="protein sequence ID" value="ATZ49821.1"/>
    <property type="molecule type" value="Genomic_DNA"/>
</dbReference>
<dbReference type="SMR" id="A6RMI1"/>
<dbReference type="EnsemblFungi" id="Bcin05g02250.1">
    <property type="protein sequence ID" value="Bcin05p02250.1"/>
    <property type="gene ID" value="Bcin05g02250"/>
</dbReference>
<dbReference type="GeneID" id="5440728"/>
<dbReference type="KEGG" id="bfu:BCIN_05g02250"/>
<dbReference type="VEuPathDB" id="FungiDB:Bcin05g02250"/>
<dbReference type="OMA" id="WSYIAEC"/>
<dbReference type="OrthoDB" id="259935at2759"/>
<dbReference type="Proteomes" id="UP000001798">
    <property type="component" value="Chromosome bcin05"/>
</dbReference>
<dbReference type="GO" id="GO:0005737">
    <property type="term" value="C:cytoplasm"/>
    <property type="evidence" value="ECO:0007669"/>
    <property type="project" value="UniProtKB-SubCell"/>
</dbReference>
<dbReference type="GO" id="GO:0034399">
    <property type="term" value="C:nuclear periphery"/>
    <property type="evidence" value="ECO:0007669"/>
    <property type="project" value="EnsemblFungi"/>
</dbReference>
<dbReference type="GO" id="GO:0050660">
    <property type="term" value="F:flavin adenine dinucleotide binding"/>
    <property type="evidence" value="ECO:0007669"/>
    <property type="project" value="InterPro"/>
</dbReference>
<dbReference type="GO" id="GO:0106414">
    <property type="term" value="F:mRNA dihydrouridine synthase activity"/>
    <property type="evidence" value="ECO:0007669"/>
    <property type="project" value="RHEA"/>
</dbReference>
<dbReference type="GO" id="GO:0003723">
    <property type="term" value="F:RNA binding"/>
    <property type="evidence" value="ECO:0007669"/>
    <property type="project" value="TreeGrafter"/>
</dbReference>
<dbReference type="GO" id="GO:0102265">
    <property type="term" value="F:tRNA-dihydrouridine47 synthase activity"/>
    <property type="evidence" value="ECO:0007669"/>
    <property type="project" value="UniProtKB-EC"/>
</dbReference>
<dbReference type="GO" id="GO:0008270">
    <property type="term" value="F:zinc ion binding"/>
    <property type="evidence" value="ECO:0007669"/>
    <property type="project" value="UniProtKB-KW"/>
</dbReference>
<dbReference type="GO" id="GO:0006397">
    <property type="term" value="P:mRNA processing"/>
    <property type="evidence" value="ECO:0007669"/>
    <property type="project" value="UniProtKB-KW"/>
</dbReference>
<dbReference type="CDD" id="cd02801">
    <property type="entry name" value="DUS_like_FMN"/>
    <property type="match status" value="1"/>
</dbReference>
<dbReference type="FunFam" id="3.20.20.70:FF:000145">
    <property type="entry name" value="tRNA-dihydrouridine(47) synthase [NAD(P)(+)]"/>
    <property type="match status" value="1"/>
</dbReference>
<dbReference type="Gene3D" id="3.20.20.70">
    <property type="entry name" value="Aldolase class I"/>
    <property type="match status" value="1"/>
</dbReference>
<dbReference type="InterPro" id="IPR013785">
    <property type="entry name" value="Aldolase_TIM"/>
</dbReference>
<dbReference type="InterPro" id="IPR035587">
    <property type="entry name" value="DUS-like_FMN-bd"/>
</dbReference>
<dbReference type="InterPro" id="IPR018517">
    <property type="entry name" value="tRNA_hU_synthase_CS"/>
</dbReference>
<dbReference type="PANTHER" id="PTHR45846">
    <property type="entry name" value="TRNA-DIHYDROURIDINE(47) SYNTHASE [NAD(P)(+)]-LIKE"/>
    <property type="match status" value="1"/>
</dbReference>
<dbReference type="PANTHER" id="PTHR45846:SF1">
    <property type="entry name" value="TRNA-DIHYDROURIDINE(47) SYNTHASE [NAD(P)(+)]-LIKE"/>
    <property type="match status" value="1"/>
</dbReference>
<dbReference type="Pfam" id="PF01207">
    <property type="entry name" value="Dus"/>
    <property type="match status" value="2"/>
</dbReference>
<dbReference type="SUPFAM" id="SSF51395">
    <property type="entry name" value="FMN-linked oxidoreductases"/>
    <property type="match status" value="1"/>
</dbReference>
<dbReference type="PROSITE" id="PS01136">
    <property type="entry name" value="UPF0034"/>
    <property type="match status" value="1"/>
</dbReference>
<organism>
    <name type="scientific">Botryotinia fuckeliana (strain B05.10)</name>
    <name type="common">Noble rot fungus</name>
    <name type="synonym">Botrytis cinerea</name>
    <dbReference type="NCBI Taxonomy" id="332648"/>
    <lineage>
        <taxon>Eukaryota</taxon>
        <taxon>Fungi</taxon>
        <taxon>Dikarya</taxon>
        <taxon>Ascomycota</taxon>
        <taxon>Pezizomycotina</taxon>
        <taxon>Leotiomycetes</taxon>
        <taxon>Helotiales</taxon>
        <taxon>Sclerotiniaceae</taxon>
        <taxon>Botrytis</taxon>
    </lineage>
</organism>
<reference key="1">
    <citation type="journal article" date="2011" name="PLoS Genet.">
        <title>Genomic analysis of the necrotrophic fungal pathogens Sclerotinia sclerotiorum and Botrytis cinerea.</title>
        <authorList>
            <person name="Amselem J."/>
            <person name="Cuomo C.A."/>
            <person name="van Kan J.A.L."/>
            <person name="Viaud M."/>
            <person name="Benito E.P."/>
            <person name="Couloux A."/>
            <person name="Coutinho P.M."/>
            <person name="de Vries R.P."/>
            <person name="Dyer P.S."/>
            <person name="Fillinger S."/>
            <person name="Fournier E."/>
            <person name="Gout L."/>
            <person name="Hahn M."/>
            <person name="Kohn L."/>
            <person name="Lapalu N."/>
            <person name="Plummer K.M."/>
            <person name="Pradier J.-M."/>
            <person name="Quevillon E."/>
            <person name="Sharon A."/>
            <person name="Simon A."/>
            <person name="ten Have A."/>
            <person name="Tudzynski B."/>
            <person name="Tudzynski P."/>
            <person name="Wincker P."/>
            <person name="Andrew M."/>
            <person name="Anthouard V."/>
            <person name="Beever R.E."/>
            <person name="Beffa R."/>
            <person name="Benoit I."/>
            <person name="Bouzid O."/>
            <person name="Brault B."/>
            <person name="Chen Z."/>
            <person name="Choquer M."/>
            <person name="Collemare J."/>
            <person name="Cotton P."/>
            <person name="Danchin E.G."/>
            <person name="Da Silva C."/>
            <person name="Gautier A."/>
            <person name="Giraud C."/>
            <person name="Giraud T."/>
            <person name="Gonzalez C."/>
            <person name="Grossetete S."/>
            <person name="Gueldener U."/>
            <person name="Henrissat B."/>
            <person name="Howlett B.J."/>
            <person name="Kodira C."/>
            <person name="Kretschmer M."/>
            <person name="Lappartient A."/>
            <person name="Leroch M."/>
            <person name="Levis C."/>
            <person name="Mauceli E."/>
            <person name="Neuveglise C."/>
            <person name="Oeser B."/>
            <person name="Pearson M."/>
            <person name="Poulain J."/>
            <person name="Poussereau N."/>
            <person name="Quesneville H."/>
            <person name="Rascle C."/>
            <person name="Schumacher J."/>
            <person name="Segurens B."/>
            <person name="Sexton A."/>
            <person name="Silva E."/>
            <person name="Sirven C."/>
            <person name="Soanes D.M."/>
            <person name="Talbot N.J."/>
            <person name="Templeton M."/>
            <person name="Yandava C."/>
            <person name="Yarden O."/>
            <person name="Zeng Q."/>
            <person name="Rollins J.A."/>
            <person name="Lebrun M.-H."/>
            <person name="Dickman M."/>
        </authorList>
    </citation>
    <scope>NUCLEOTIDE SEQUENCE [LARGE SCALE GENOMIC DNA]</scope>
    <source>
        <strain>B05.10</strain>
    </source>
</reference>
<reference key="2">
    <citation type="journal article" date="2012" name="Eukaryot. Cell">
        <title>Genome update of Botrytis cinerea strains B05.10 and T4.</title>
        <authorList>
            <person name="Staats M."/>
            <person name="van Kan J.A.L."/>
        </authorList>
    </citation>
    <scope>NUCLEOTIDE SEQUENCE [LARGE SCALE GENOMIC DNA]</scope>
    <scope>GENOME REANNOTATION</scope>
    <source>
        <strain>B05.10</strain>
    </source>
</reference>
<reference key="3">
    <citation type="journal article" date="2017" name="Mol. Plant Pathol.">
        <title>A gapless genome sequence of the fungus Botrytis cinerea.</title>
        <authorList>
            <person name="van Kan J.A.L."/>
            <person name="Stassen J.H.M."/>
            <person name="Mosbach A."/>
            <person name="van der Lee T.A.J."/>
            <person name="Faino L."/>
            <person name="Farmer A.D."/>
            <person name="Papasotiriou D.G."/>
            <person name="Zhou S."/>
            <person name="Seidl M.F."/>
            <person name="Cottam E."/>
            <person name="Edel D."/>
            <person name="Hahn M."/>
            <person name="Schwartz D.C."/>
            <person name="Dietrich R.A."/>
            <person name="Widdison S."/>
            <person name="Scalliet G."/>
        </authorList>
    </citation>
    <scope>NUCLEOTIDE SEQUENCE [LARGE SCALE GENOMIC DNA]</scope>
    <scope>GENOME REANNOTATION</scope>
    <source>
        <strain>B05.10</strain>
    </source>
</reference>
<accession>A6RMI1</accession>
<accession>A0A384JHC3</accession>